<keyword id="KW-0256">Endoplasmic reticulum</keyword>
<keyword id="KW-0325">Glycoprotein</keyword>
<keyword id="KW-0472">Membrane</keyword>
<keyword id="KW-1185">Reference proteome</keyword>
<keyword id="KW-0762">Sugar transport</keyword>
<keyword id="KW-0812">Transmembrane</keyword>
<keyword id="KW-1133">Transmembrane helix</keyword>
<keyword id="KW-0813">Transport</keyword>
<proteinExistence type="inferred from homology"/>
<evidence type="ECO:0000250" key="1"/>
<evidence type="ECO:0000255" key="2"/>
<evidence type="ECO:0000305" key="3"/>
<comment type="function">
    <text evidence="1">May be involved in specific transport of UDP-Gal from the cytosol to the Golgi lumen. Involved in the maintenance of optimal conditions for the folding of secretory pathway proteins in the endoplasmic reticulum (By similarity).</text>
</comment>
<comment type="subcellular location">
    <subcellularLocation>
        <location evidence="1">Endoplasmic reticulum membrane</location>
        <topology evidence="1">Multi-pass membrane protein</topology>
    </subcellularLocation>
</comment>
<comment type="similarity">
    <text evidence="3">Belongs to the nucleotide-sugar transporter family. SLC35B subfamily.</text>
</comment>
<protein>
    <recommendedName>
        <fullName>UDP-galactose transporter homolog 1</fullName>
    </recommendedName>
</protein>
<reference key="1">
    <citation type="journal article" date="2004" name="Science">
        <title>The Ashbya gossypii genome as a tool for mapping the ancient Saccharomyces cerevisiae genome.</title>
        <authorList>
            <person name="Dietrich F.S."/>
            <person name="Voegeli S."/>
            <person name="Brachat S."/>
            <person name="Lerch A."/>
            <person name="Gates K."/>
            <person name="Steiner S."/>
            <person name="Mohr C."/>
            <person name="Poehlmann R."/>
            <person name="Luedi P."/>
            <person name="Choi S."/>
            <person name="Wing R.A."/>
            <person name="Flavier A."/>
            <person name="Gaffney T.D."/>
            <person name="Philippsen P."/>
        </authorList>
    </citation>
    <scope>NUCLEOTIDE SEQUENCE [LARGE SCALE GENOMIC DNA]</scope>
    <source>
        <strain>ATCC 10895 / CBS 109.51 / FGSC 9923 / NRRL Y-1056</strain>
    </source>
</reference>
<reference key="2">
    <citation type="journal article" date="2013" name="G3 (Bethesda)">
        <title>Genomes of Ashbya fungi isolated from insects reveal four mating-type loci, numerous translocations, lack of transposons, and distinct gene duplications.</title>
        <authorList>
            <person name="Dietrich F.S."/>
            <person name="Voegeli S."/>
            <person name="Kuo S."/>
            <person name="Philippsen P."/>
        </authorList>
    </citation>
    <scope>GENOME REANNOTATION</scope>
    <scope>SEQUENCE REVISION TO 89</scope>
    <source>
        <strain>ATCC 10895 / CBS 109.51 / FGSC 9923 / NRRL Y-1056</strain>
    </source>
</reference>
<feature type="chain" id="PRO_0000213403" description="UDP-galactose transporter homolog 1">
    <location>
        <begin position="1"/>
        <end position="324"/>
    </location>
</feature>
<feature type="transmembrane region" description="Helical" evidence="2">
    <location>
        <begin position="7"/>
        <end position="27"/>
    </location>
</feature>
<feature type="transmembrane region" description="Helical" evidence="2">
    <location>
        <begin position="42"/>
        <end position="62"/>
    </location>
</feature>
<feature type="transmembrane region" description="Helical" evidence="2">
    <location>
        <begin position="106"/>
        <end position="126"/>
    </location>
</feature>
<feature type="transmembrane region" description="Helical" evidence="2">
    <location>
        <begin position="135"/>
        <end position="155"/>
    </location>
</feature>
<feature type="transmembrane region" description="Helical" evidence="2">
    <location>
        <begin position="161"/>
        <end position="181"/>
    </location>
</feature>
<feature type="transmembrane region" description="Helical" evidence="2">
    <location>
        <begin position="199"/>
        <end position="219"/>
    </location>
</feature>
<feature type="transmembrane region" description="Helical" evidence="2">
    <location>
        <begin position="237"/>
        <end position="257"/>
    </location>
</feature>
<feature type="transmembrane region" description="Helical" evidence="2">
    <location>
        <begin position="265"/>
        <end position="285"/>
    </location>
</feature>
<feature type="transmembrane region" description="Helical" evidence="2">
    <location>
        <begin position="290"/>
        <end position="310"/>
    </location>
</feature>
<feature type="glycosylation site" description="N-linked (GlcNAc...) asparagine" evidence="2">
    <location>
        <position position="97"/>
    </location>
</feature>
<dbReference type="EMBL" id="AE016819">
    <property type="protein sequence ID" value="AAS53220.2"/>
    <property type="molecule type" value="Genomic_DNA"/>
</dbReference>
<dbReference type="RefSeq" id="NP_985396.2">
    <property type="nucleotide sequence ID" value="NM_210750.2"/>
</dbReference>
<dbReference type="SMR" id="Q755H7"/>
<dbReference type="FunCoup" id="Q755H7">
    <property type="interactions" value="478"/>
</dbReference>
<dbReference type="STRING" id="284811.Q755H7"/>
<dbReference type="GlyCosmos" id="Q755H7">
    <property type="glycosylation" value="1 site, No reported glycans"/>
</dbReference>
<dbReference type="EnsemblFungi" id="AAS53220">
    <property type="protein sequence ID" value="AAS53220"/>
    <property type="gene ID" value="AGOS_AFL154C"/>
</dbReference>
<dbReference type="GeneID" id="4621622"/>
<dbReference type="KEGG" id="ago:AGOS_AFL154C"/>
<dbReference type="eggNOG" id="KOG1581">
    <property type="taxonomic scope" value="Eukaryota"/>
</dbReference>
<dbReference type="HOGENOM" id="CLU_036019_0_2_1"/>
<dbReference type="InParanoid" id="Q755H7"/>
<dbReference type="OMA" id="CGAIGQV"/>
<dbReference type="OrthoDB" id="1601at2759"/>
<dbReference type="Proteomes" id="UP000000591">
    <property type="component" value="Chromosome VI"/>
</dbReference>
<dbReference type="GO" id="GO:0005789">
    <property type="term" value="C:endoplasmic reticulum membrane"/>
    <property type="evidence" value="ECO:0000318"/>
    <property type="project" value="GO_Central"/>
</dbReference>
<dbReference type="GO" id="GO:0000139">
    <property type="term" value="C:Golgi membrane"/>
    <property type="evidence" value="ECO:0000318"/>
    <property type="project" value="GO_Central"/>
</dbReference>
<dbReference type="GO" id="GO:0005459">
    <property type="term" value="F:UDP-galactose transmembrane transporter activity"/>
    <property type="evidence" value="ECO:0000318"/>
    <property type="project" value="GO_Central"/>
</dbReference>
<dbReference type="GO" id="GO:0005460">
    <property type="term" value="F:UDP-glucose transmembrane transporter activity"/>
    <property type="evidence" value="ECO:0000318"/>
    <property type="project" value="GO_Central"/>
</dbReference>
<dbReference type="GO" id="GO:0072334">
    <property type="term" value="P:UDP-galactose transmembrane transport"/>
    <property type="evidence" value="ECO:0000318"/>
    <property type="project" value="GO_Central"/>
</dbReference>
<dbReference type="GO" id="GO:0120112">
    <property type="term" value="P:UDP-glucose transmembrane transport into endoplasmic reticulum"/>
    <property type="evidence" value="ECO:0007669"/>
    <property type="project" value="EnsemblFungi"/>
</dbReference>
<dbReference type="InterPro" id="IPR013657">
    <property type="entry name" value="SCL35B1-4/HUT1"/>
</dbReference>
<dbReference type="PANTHER" id="PTHR10778">
    <property type="entry name" value="SOLUTE CARRIER FAMILY 35 MEMBER B"/>
    <property type="match status" value="1"/>
</dbReference>
<dbReference type="PANTHER" id="PTHR10778:SF10">
    <property type="entry name" value="SOLUTE CARRIER FAMILY 35 MEMBER B1"/>
    <property type="match status" value="1"/>
</dbReference>
<dbReference type="Pfam" id="PF08449">
    <property type="entry name" value="UAA"/>
    <property type="match status" value="1"/>
</dbReference>
<dbReference type="SUPFAM" id="SSF103481">
    <property type="entry name" value="Multidrug resistance efflux transporter EmrE"/>
    <property type="match status" value="1"/>
</dbReference>
<organism>
    <name type="scientific">Eremothecium gossypii (strain ATCC 10895 / CBS 109.51 / FGSC 9923 / NRRL Y-1056)</name>
    <name type="common">Yeast</name>
    <name type="synonym">Ashbya gossypii</name>
    <dbReference type="NCBI Taxonomy" id="284811"/>
    <lineage>
        <taxon>Eukaryota</taxon>
        <taxon>Fungi</taxon>
        <taxon>Dikarya</taxon>
        <taxon>Ascomycota</taxon>
        <taxon>Saccharomycotina</taxon>
        <taxon>Saccharomycetes</taxon>
        <taxon>Saccharomycetales</taxon>
        <taxon>Saccharomycetaceae</taxon>
        <taxon>Eremothecium</taxon>
    </lineage>
</organism>
<accession>Q755H7</accession>
<sequence length="324" mass="35343">MGSQVRLVIAVCGIYATFLTWSLAQEPLTTSVWPNSAARFSHSSFIVLCQALTAAVVGLCYLKAQRSGYGAREFIRKHWADVAGISLTQALSAPAANHSLQYVDYVGYMLAKSCKLLPIMLVHVLVYRTPIGRDKALVGVLVSGGVALFTLGGAERKQGEASLYGLGMLLVSLFLDGLTNASQDRLLRRPASKKITGAHLMVALNTAIVLWNLAYLVLFDRTQWQGSLQQLHADPAILTYLFTYCACGALGQCFVFFTLEHYSSLVLATVTVTRKMVSMLLSIVVYGHSVRPVQWLGILVVFGGIIWETVKKGQRGSGQKSKQH</sequence>
<gene>
    <name type="primary">HUT1</name>
    <name type="ordered locus">AFL154C</name>
</gene>
<name>HUT1_EREGS</name>